<proteinExistence type="inferred from homology"/>
<name>BPT_PARDP</name>
<protein>
    <recommendedName>
        <fullName evidence="1">Aspartate/glutamate leucyltransferase</fullName>
        <ecNumber evidence="1">2.3.2.29</ecNumber>
    </recommendedName>
</protein>
<sequence>MRHTLPHAPQFYVTAPQPCPYLHGRAERKLFTALAGDSANELNNALSRQGFRRSQNVLYRPSCESCVACMSARIRVSEFEPSRTQRRIARRNAHLRRLATSAWATEEQYELFRAYLDERHADGGMADMDIFEFAAMIEETPVRTRVIEYRAHQGDSSEIPPPPDSDQLVAVCLTDVLDDGLSLVYSFYDPALEGFSLGTHIILDHIDLARSAGLPFVYLGYWVPGSRKMDYKAKFSALEIYKGGVWQPIGDPAQHTSDIHPLSIDPIVEQVARINLPSNRR</sequence>
<feature type="chain" id="PRO_1000045139" description="Aspartate/glutamate leucyltransferase">
    <location>
        <begin position="1"/>
        <end position="281"/>
    </location>
</feature>
<keyword id="KW-0012">Acyltransferase</keyword>
<keyword id="KW-0963">Cytoplasm</keyword>
<keyword id="KW-1185">Reference proteome</keyword>
<keyword id="KW-0808">Transferase</keyword>
<reference key="1">
    <citation type="submission" date="2006-12" db="EMBL/GenBank/DDBJ databases">
        <title>Complete sequence of chromosome 1 of Paracoccus denitrificans PD1222.</title>
        <authorList>
            <person name="Copeland A."/>
            <person name="Lucas S."/>
            <person name="Lapidus A."/>
            <person name="Barry K."/>
            <person name="Detter J.C."/>
            <person name="Glavina del Rio T."/>
            <person name="Hammon N."/>
            <person name="Israni S."/>
            <person name="Dalin E."/>
            <person name="Tice H."/>
            <person name="Pitluck S."/>
            <person name="Munk A.C."/>
            <person name="Brettin T."/>
            <person name="Bruce D."/>
            <person name="Han C."/>
            <person name="Tapia R."/>
            <person name="Gilna P."/>
            <person name="Schmutz J."/>
            <person name="Larimer F."/>
            <person name="Land M."/>
            <person name="Hauser L."/>
            <person name="Kyrpides N."/>
            <person name="Lykidis A."/>
            <person name="Spiro S."/>
            <person name="Richardson D.J."/>
            <person name="Moir J.W.B."/>
            <person name="Ferguson S.J."/>
            <person name="van Spanning R.J.M."/>
            <person name="Richardson P."/>
        </authorList>
    </citation>
    <scope>NUCLEOTIDE SEQUENCE [LARGE SCALE GENOMIC DNA]</scope>
    <source>
        <strain>Pd 1222</strain>
    </source>
</reference>
<organism>
    <name type="scientific">Paracoccus denitrificans (strain Pd 1222)</name>
    <dbReference type="NCBI Taxonomy" id="318586"/>
    <lineage>
        <taxon>Bacteria</taxon>
        <taxon>Pseudomonadati</taxon>
        <taxon>Pseudomonadota</taxon>
        <taxon>Alphaproteobacteria</taxon>
        <taxon>Rhodobacterales</taxon>
        <taxon>Paracoccaceae</taxon>
        <taxon>Paracoccus</taxon>
    </lineage>
</organism>
<evidence type="ECO:0000255" key="1">
    <source>
        <dbReference type="HAMAP-Rule" id="MF_00689"/>
    </source>
</evidence>
<gene>
    <name evidence="1" type="primary">bpt</name>
    <name type="ordered locus">Pden_2168</name>
</gene>
<dbReference type="EC" id="2.3.2.29" evidence="1"/>
<dbReference type="EMBL" id="CP000489">
    <property type="protein sequence ID" value="ABL70260.1"/>
    <property type="molecule type" value="Genomic_DNA"/>
</dbReference>
<dbReference type="RefSeq" id="WP_011748455.1">
    <property type="nucleotide sequence ID" value="NC_008686.1"/>
</dbReference>
<dbReference type="SMR" id="A1B416"/>
<dbReference type="STRING" id="318586.Pden_2168"/>
<dbReference type="EnsemblBacteria" id="ABL70260">
    <property type="protein sequence ID" value="ABL70260"/>
    <property type="gene ID" value="Pden_2168"/>
</dbReference>
<dbReference type="GeneID" id="93450565"/>
<dbReference type="KEGG" id="pde:Pden_2168"/>
<dbReference type="eggNOG" id="COG2935">
    <property type="taxonomic scope" value="Bacteria"/>
</dbReference>
<dbReference type="HOGENOM" id="CLU_077607_1_0_5"/>
<dbReference type="OrthoDB" id="9782022at2"/>
<dbReference type="Proteomes" id="UP000000361">
    <property type="component" value="Chromosome 1"/>
</dbReference>
<dbReference type="GO" id="GO:0005737">
    <property type="term" value="C:cytoplasm"/>
    <property type="evidence" value="ECO:0007669"/>
    <property type="project" value="UniProtKB-SubCell"/>
</dbReference>
<dbReference type="GO" id="GO:0004057">
    <property type="term" value="F:arginyl-tRNA--protein transferase activity"/>
    <property type="evidence" value="ECO:0007669"/>
    <property type="project" value="InterPro"/>
</dbReference>
<dbReference type="GO" id="GO:0008914">
    <property type="term" value="F:leucyl-tRNA--protein transferase activity"/>
    <property type="evidence" value="ECO:0007669"/>
    <property type="project" value="UniProtKB-UniRule"/>
</dbReference>
<dbReference type="GO" id="GO:0071596">
    <property type="term" value="P:ubiquitin-dependent protein catabolic process via the N-end rule pathway"/>
    <property type="evidence" value="ECO:0007669"/>
    <property type="project" value="InterPro"/>
</dbReference>
<dbReference type="HAMAP" id="MF_00689">
    <property type="entry name" value="Bpt"/>
    <property type="match status" value="1"/>
</dbReference>
<dbReference type="InterPro" id="IPR016181">
    <property type="entry name" value="Acyl_CoA_acyltransferase"/>
</dbReference>
<dbReference type="InterPro" id="IPR017138">
    <property type="entry name" value="Asp_Glu_LeuTrfase"/>
</dbReference>
<dbReference type="InterPro" id="IPR030700">
    <property type="entry name" value="N-end_Aminoacyl_Trfase"/>
</dbReference>
<dbReference type="InterPro" id="IPR007472">
    <property type="entry name" value="N-end_Aminoacyl_Trfase_C"/>
</dbReference>
<dbReference type="InterPro" id="IPR007471">
    <property type="entry name" value="N-end_Aminoacyl_Trfase_N"/>
</dbReference>
<dbReference type="NCBIfam" id="NF002342">
    <property type="entry name" value="PRK01305.1-3"/>
    <property type="match status" value="1"/>
</dbReference>
<dbReference type="NCBIfam" id="NF002343">
    <property type="entry name" value="PRK01305.1-4"/>
    <property type="match status" value="1"/>
</dbReference>
<dbReference type="NCBIfam" id="NF002346">
    <property type="entry name" value="PRK01305.2-3"/>
    <property type="match status" value="1"/>
</dbReference>
<dbReference type="PANTHER" id="PTHR21367">
    <property type="entry name" value="ARGININE-TRNA-PROTEIN TRANSFERASE 1"/>
    <property type="match status" value="1"/>
</dbReference>
<dbReference type="PANTHER" id="PTHR21367:SF1">
    <property type="entry name" value="ARGINYL-TRNA--PROTEIN TRANSFERASE 1"/>
    <property type="match status" value="1"/>
</dbReference>
<dbReference type="Pfam" id="PF04377">
    <property type="entry name" value="ATE_C"/>
    <property type="match status" value="1"/>
</dbReference>
<dbReference type="Pfam" id="PF04376">
    <property type="entry name" value="ATE_N"/>
    <property type="match status" value="1"/>
</dbReference>
<dbReference type="PIRSF" id="PIRSF037208">
    <property type="entry name" value="ATE_pro_prd"/>
    <property type="match status" value="1"/>
</dbReference>
<dbReference type="SUPFAM" id="SSF55729">
    <property type="entry name" value="Acyl-CoA N-acyltransferases (Nat)"/>
    <property type="match status" value="1"/>
</dbReference>
<comment type="function">
    <text evidence="1">Functions in the N-end rule pathway of protein degradation where it conjugates Leu from its aminoacyl-tRNA to the N-termini of proteins containing an N-terminal aspartate or glutamate.</text>
</comment>
<comment type="catalytic activity">
    <reaction evidence="1">
        <text>N-terminal L-glutamyl-[protein] + L-leucyl-tRNA(Leu) = N-terminal L-leucyl-L-glutamyl-[protein] + tRNA(Leu) + H(+)</text>
        <dbReference type="Rhea" id="RHEA:50412"/>
        <dbReference type="Rhea" id="RHEA-COMP:9613"/>
        <dbReference type="Rhea" id="RHEA-COMP:9622"/>
        <dbReference type="Rhea" id="RHEA-COMP:12664"/>
        <dbReference type="Rhea" id="RHEA-COMP:12668"/>
        <dbReference type="ChEBI" id="CHEBI:15378"/>
        <dbReference type="ChEBI" id="CHEBI:64721"/>
        <dbReference type="ChEBI" id="CHEBI:78442"/>
        <dbReference type="ChEBI" id="CHEBI:78494"/>
        <dbReference type="ChEBI" id="CHEBI:133041"/>
        <dbReference type="EC" id="2.3.2.29"/>
    </reaction>
</comment>
<comment type="catalytic activity">
    <reaction evidence="1">
        <text>N-terminal L-aspartyl-[protein] + L-leucyl-tRNA(Leu) = N-terminal L-leucyl-L-aspartyl-[protein] + tRNA(Leu) + H(+)</text>
        <dbReference type="Rhea" id="RHEA:50420"/>
        <dbReference type="Rhea" id="RHEA-COMP:9613"/>
        <dbReference type="Rhea" id="RHEA-COMP:9622"/>
        <dbReference type="Rhea" id="RHEA-COMP:12669"/>
        <dbReference type="Rhea" id="RHEA-COMP:12674"/>
        <dbReference type="ChEBI" id="CHEBI:15378"/>
        <dbReference type="ChEBI" id="CHEBI:64720"/>
        <dbReference type="ChEBI" id="CHEBI:78442"/>
        <dbReference type="ChEBI" id="CHEBI:78494"/>
        <dbReference type="ChEBI" id="CHEBI:133042"/>
        <dbReference type="EC" id="2.3.2.29"/>
    </reaction>
</comment>
<comment type="subcellular location">
    <subcellularLocation>
        <location evidence="1">Cytoplasm</location>
    </subcellularLocation>
</comment>
<comment type="similarity">
    <text evidence="1">Belongs to the R-transferase family. Bpt subfamily.</text>
</comment>
<accession>A1B416</accession>